<evidence type="ECO:0000255" key="1">
    <source>
        <dbReference type="HAMAP-Rule" id="MF_00685"/>
    </source>
</evidence>
<sequence>MGVAAVLDWLVQDGERLASCRHDHPFAVLGPQASDQGWTVRMWMPEAQSVSLLQAGEEIAMTTPNHPWVFEAQVSQDPGCHYRVKVERGGIVHEQHDPWAFRGEWMGEMDRHLFAEGNHHHIWQKMGAHLTERDGITGVMFCLWAPNALSVSVIGDLNSWDGRHHPMQQRVGGIWELFVPGLEEGHLYKYEIRTQDGHCYQKADPYGFQHEVRPDNSSVVARLNGFQWSDQTWMQKRDSSNALDQPISVYEMHLGSWIHASADEPWIQPDGTPRPPVPAADMKPGARLLTYAELADRLIPYVKDRGFTHIEVMPITEHPFDGSWGYQVTGWYAPTSRYGTPDEFRAFVDRCHAEGIGVIIDWVPGHFPKDAHGLAFFDGAHLYEHSDPRIGEHKEWGTLIFNYSRNEVRNFLVANLIFWFEQFHIDGIRVDAVASMLYRDYLRPDGEWLPNESGGRENTEAVRFLQQANHVLFQHFPGALSIAEESTTWPMVTQPTDSGGLGFNLKWNMGWMHDMLDYFELDPWFRQFHQNNITFSIWYTYTENFMLALSHDEVVHGKSHLMHKMPGDDWQKYANTRALLSYMWTHPGKKTIFMGMEFGQRAEWNVWGDLQWDLLNYEPHKGIQRLVDDLNVLYKAEPALWRDDFDQFGFQWIDCNDNRHSVISFMRRESASGTWLVVVANFTPQSHSHYRVGVPLSGFYEEIFNSDAAKYGGSNLGNMGGKPTDEWGIHGYENSLDLCLPPLSLMVFKHDPKRSLNSSEPDNIV</sequence>
<proteinExistence type="inferred from homology"/>
<dbReference type="EC" id="2.4.1.18" evidence="1"/>
<dbReference type="EMBL" id="CP000110">
    <property type="protein sequence ID" value="ABB34776.1"/>
    <property type="molecule type" value="Genomic_DNA"/>
</dbReference>
<dbReference type="RefSeq" id="WP_011364000.1">
    <property type="nucleotide sequence ID" value="NC_007516.1"/>
</dbReference>
<dbReference type="SMR" id="Q3AKV6"/>
<dbReference type="STRING" id="110662.Syncc9605_1018"/>
<dbReference type="CAZy" id="CBM48">
    <property type="family name" value="Carbohydrate-Binding Module Family 48"/>
</dbReference>
<dbReference type="CAZy" id="GH13">
    <property type="family name" value="Glycoside Hydrolase Family 13"/>
</dbReference>
<dbReference type="KEGG" id="syd:Syncc9605_1018"/>
<dbReference type="eggNOG" id="COG0296">
    <property type="taxonomic scope" value="Bacteria"/>
</dbReference>
<dbReference type="HOGENOM" id="CLU_004245_3_2_3"/>
<dbReference type="OrthoDB" id="9800174at2"/>
<dbReference type="UniPathway" id="UPA00164"/>
<dbReference type="GO" id="GO:0005829">
    <property type="term" value="C:cytosol"/>
    <property type="evidence" value="ECO:0007669"/>
    <property type="project" value="TreeGrafter"/>
</dbReference>
<dbReference type="GO" id="GO:0003844">
    <property type="term" value="F:1,4-alpha-glucan branching enzyme activity"/>
    <property type="evidence" value="ECO:0007669"/>
    <property type="project" value="UniProtKB-UniRule"/>
</dbReference>
<dbReference type="GO" id="GO:0043169">
    <property type="term" value="F:cation binding"/>
    <property type="evidence" value="ECO:0007669"/>
    <property type="project" value="InterPro"/>
</dbReference>
<dbReference type="GO" id="GO:0004553">
    <property type="term" value="F:hydrolase activity, hydrolyzing O-glycosyl compounds"/>
    <property type="evidence" value="ECO:0007669"/>
    <property type="project" value="InterPro"/>
</dbReference>
<dbReference type="GO" id="GO:0005978">
    <property type="term" value="P:glycogen biosynthetic process"/>
    <property type="evidence" value="ECO:0007669"/>
    <property type="project" value="UniProtKB-UniRule"/>
</dbReference>
<dbReference type="CDD" id="cd11322">
    <property type="entry name" value="AmyAc_Glg_BE"/>
    <property type="match status" value="1"/>
</dbReference>
<dbReference type="CDD" id="cd02855">
    <property type="entry name" value="E_set_GBE_prok_N"/>
    <property type="match status" value="1"/>
</dbReference>
<dbReference type="FunFam" id="2.60.40.10:FF:000169">
    <property type="entry name" value="1,4-alpha-glucan branching enzyme GlgB"/>
    <property type="match status" value="1"/>
</dbReference>
<dbReference type="FunFam" id="2.60.40.1180:FF:000002">
    <property type="entry name" value="1,4-alpha-glucan branching enzyme GlgB"/>
    <property type="match status" value="1"/>
</dbReference>
<dbReference type="FunFam" id="3.20.20.80:FF:000003">
    <property type="entry name" value="1,4-alpha-glucan branching enzyme GlgB"/>
    <property type="match status" value="1"/>
</dbReference>
<dbReference type="Gene3D" id="3.20.20.80">
    <property type="entry name" value="Glycosidases"/>
    <property type="match status" value="1"/>
</dbReference>
<dbReference type="Gene3D" id="2.60.40.1180">
    <property type="entry name" value="Golgi alpha-mannosidase II"/>
    <property type="match status" value="1"/>
</dbReference>
<dbReference type="Gene3D" id="2.60.40.10">
    <property type="entry name" value="Immunoglobulins"/>
    <property type="match status" value="2"/>
</dbReference>
<dbReference type="HAMAP" id="MF_00685">
    <property type="entry name" value="GlgB"/>
    <property type="match status" value="1"/>
</dbReference>
<dbReference type="InterPro" id="IPR006048">
    <property type="entry name" value="A-amylase/branching_C"/>
</dbReference>
<dbReference type="InterPro" id="IPR037439">
    <property type="entry name" value="Branching_enzy"/>
</dbReference>
<dbReference type="InterPro" id="IPR006407">
    <property type="entry name" value="GlgB"/>
</dbReference>
<dbReference type="InterPro" id="IPR054169">
    <property type="entry name" value="GlgB_N"/>
</dbReference>
<dbReference type="InterPro" id="IPR044143">
    <property type="entry name" value="GlgB_N_E_set_prok"/>
</dbReference>
<dbReference type="InterPro" id="IPR006047">
    <property type="entry name" value="Glyco_hydro_13_cat_dom"/>
</dbReference>
<dbReference type="InterPro" id="IPR004193">
    <property type="entry name" value="Glyco_hydro_13_N"/>
</dbReference>
<dbReference type="InterPro" id="IPR013780">
    <property type="entry name" value="Glyco_hydro_b"/>
</dbReference>
<dbReference type="InterPro" id="IPR017853">
    <property type="entry name" value="Glycoside_hydrolase_SF"/>
</dbReference>
<dbReference type="InterPro" id="IPR013783">
    <property type="entry name" value="Ig-like_fold"/>
</dbReference>
<dbReference type="InterPro" id="IPR014756">
    <property type="entry name" value="Ig_E-set"/>
</dbReference>
<dbReference type="NCBIfam" id="TIGR01515">
    <property type="entry name" value="branching_enzym"/>
    <property type="match status" value="1"/>
</dbReference>
<dbReference type="NCBIfam" id="NF003811">
    <property type="entry name" value="PRK05402.1"/>
    <property type="match status" value="1"/>
</dbReference>
<dbReference type="NCBIfam" id="NF008967">
    <property type="entry name" value="PRK12313.1"/>
    <property type="match status" value="1"/>
</dbReference>
<dbReference type="PANTHER" id="PTHR43651">
    <property type="entry name" value="1,4-ALPHA-GLUCAN-BRANCHING ENZYME"/>
    <property type="match status" value="1"/>
</dbReference>
<dbReference type="PANTHER" id="PTHR43651:SF3">
    <property type="entry name" value="1,4-ALPHA-GLUCAN-BRANCHING ENZYME"/>
    <property type="match status" value="1"/>
</dbReference>
<dbReference type="Pfam" id="PF00128">
    <property type="entry name" value="Alpha-amylase"/>
    <property type="match status" value="2"/>
</dbReference>
<dbReference type="Pfam" id="PF02806">
    <property type="entry name" value="Alpha-amylase_C"/>
    <property type="match status" value="1"/>
</dbReference>
<dbReference type="Pfam" id="PF02922">
    <property type="entry name" value="CBM_48"/>
    <property type="match status" value="1"/>
</dbReference>
<dbReference type="Pfam" id="PF22019">
    <property type="entry name" value="GlgB_N"/>
    <property type="match status" value="1"/>
</dbReference>
<dbReference type="PIRSF" id="PIRSF000463">
    <property type="entry name" value="GlgB"/>
    <property type="match status" value="1"/>
</dbReference>
<dbReference type="SMART" id="SM00642">
    <property type="entry name" value="Aamy"/>
    <property type="match status" value="1"/>
</dbReference>
<dbReference type="SUPFAM" id="SSF51445">
    <property type="entry name" value="(Trans)glycosidases"/>
    <property type="match status" value="1"/>
</dbReference>
<dbReference type="SUPFAM" id="SSF81296">
    <property type="entry name" value="E set domains"/>
    <property type="match status" value="2"/>
</dbReference>
<dbReference type="SUPFAM" id="SSF51011">
    <property type="entry name" value="Glycosyl hydrolase domain"/>
    <property type="match status" value="1"/>
</dbReference>
<feature type="chain" id="PRO_0000260706" description="1,4-alpha-glucan branching enzyme GlgB">
    <location>
        <begin position="1"/>
        <end position="765"/>
    </location>
</feature>
<feature type="active site" description="Nucleophile" evidence="1">
    <location>
        <position position="431"/>
    </location>
</feature>
<feature type="active site" description="Proton donor" evidence="1">
    <location>
        <position position="484"/>
    </location>
</feature>
<organism>
    <name type="scientific">Synechococcus sp. (strain CC9605)</name>
    <dbReference type="NCBI Taxonomy" id="110662"/>
    <lineage>
        <taxon>Bacteria</taxon>
        <taxon>Bacillati</taxon>
        <taxon>Cyanobacteriota</taxon>
        <taxon>Cyanophyceae</taxon>
        <taxon>Synechococcales</taxon>
        <taxon>Synechococcaceae</taxon>
        <taxon>Synechococcus</taxon>
    </lineage>
</organism>
<comment type="function">
    <text evidence="1">Catalyzes the formation of the alpha-1,6-glucosidic linkages in glycogen by scission of a 1,4-alpha-linked oligosaccharide from growing alpha-1,4-glucan chains and the subsequent attachment of the oligosaccharide to the alpha-1,6 position.</text>
</comment>
<comment type="catalytic activity">
    <reaction evidence="1">
        <text>Transfers a segment of a (1-&gt;4)-alpha-D-glucan chain to a primary hydroxy group in a similar glucan chain.</text>
        <dbReference type="EC" id="2.4.1.18"/>
    </reaction>
</comment>
<comment type="pathway">
    <text evidence="1">Glycan biosynthesis; glycogen biosynthesis.</text>
</comment>
<comment type="subunit">
    <text evidence="1">Monomer.</text>
</comment>
<comment type="similarity">
    <text evidence="1">Belongs to the glycosyl hydrolase 13 family. GlgB subfamily.</text>
</comment>
<protein>
    <recommendedName>
        <fullName evidence="1">1,4-alpha-glucan branching enzyme GlgB</fullName>
        <ecNumber evidence="1">2.4.1.18</ecNumber>
    </recommendedName>
    <alternativeName>
        <fullName evidence="1">1,4-alpha-D-glucan:1,4-alpha-D-glucan 6-glucosyl-transferase</fullName>
    </alternativeName>
    <alternativeName>
        <fullName evidence="1">Alpha-(1-&gt;4)-glucan branching enzyme</fullName>
    </alternativeName>
    <alternativeName>
        <fullName evidence="1">Glycogen branching enzyme</fullName>
        <shortName evidence="1">BE</shortName>
    </alternativeName>
</protein>
<name>GLGB_SYNSC</name>
<keyword id="KW-0119">Carbohydrate metabolism</keyword>
<keyword id="KW-0320">Glycogen biosynthesis</keyword>
<keyword id="KW-0321">Glycogen metabolism</keyword>
<keyword id="KW-0328">Glycosyltransferase</keyword>
<keyword id="KW-0808">Transferase</keyword>
<reference key="1">
    <citation type="submission" date="2005-07" db="EMBL/GenBank/DDBJ databases">
        <title>Complete sequence of Synechococcus sp. CC9605.</title>
        <authorList>
            <consortium name="US DOE Joint Genome Institute"/>
            <person name="Copeland A."/>
            <person name="Lucas S."/>
            <person name="Lapidus A."/>
            <person name="Barry K."/>
            <person name="Detter J.C."/>
            <person name="Glavina T."/>
            <person name="Hammon N."/>
            <person name="Israni S."/>
            <person name="Pitluck S."/>
            <person name="Schmutz J."/>
            <person name="Martinez M."/>
            <person name="Larimer F."/>
            <person name="Land M."/>
            <person name="Kyrpides N."/>
            <person name="Ivanova N."/>
            <person name="Richardson P."/>
        </authorList>
    </citation>
    <scope>NUCLEOTIDE SEQUENCE [LARGE SCALE GENOMIC DNA]</scope>
    <source>
        <strain>CC9605</strain>
    </source>
</reference>
<accession>Q3AKV6</accession>
<gene>
    <name evidence="1" type="primary">glgB</name>
    <name type="ordered locus">Syncc9605_1018</name>
</gene>